<name>O2T10_HUMAN</name>
<sequence>MRLANQTLGGDFFLLGIFSQISHPGRLCLLIFSIFLMAVSWNITLILLIHIDSSLHTPMYFFINQLSLIDLTYISVTVPKMLVNQLAKDKTISVLGCGTQMYFYLQLGGAECCLLAAMAYDRYVAICHPLRYSVLMSHRVCLLLASGCWFVGSVDGFMLTPIAMSFPFCRSHEIQHFFCEVPAVLKLSCSDTSLYKIFMYLCCVIMLLIPVTVISVSYYYIILTIHKMNSVEGRKKAFTTCSSHITVVSLFYGAAIYNYMLPSSYQTPEKDMMSSFFYTILTPVLNPIIYSFRNKDVTRALKKMLSVQKPPY</sequence>
<proteinExistence type="evidence at transcript level"/>
<feature type="chain" id="PRO_0000150502" description="Olfactory receptor 2T10">
    <location>
        <begin position="1"/>
        <end position="312"/>
    </location>
</feature>
<feature type="topological domain" description="Extracellular" evidence="1">
    <location>
        <begin position="1"/>
        <end position="25"/>
    </location>
</feature>
<feature type="transmembrane region" description="Helical; Name=1" evidence="1">
    <location>
        <begin position="26"/>
        <end position="49"/>
    </location>
</feature>
<feature type="topological domain" description="Cytoplasmic" evidence="1">
    <location>
        <begin position="50"/>
        <end position="57"/>
    </location>
</feature>
<feature type="transmembrane region" description="Helical; Name=2" evidence="1">
    <location>
        <begin position="58"/>
        <end position="79"/>
    </location>
</feature>
<feature type="topological domain" description="Extracellular" evidence="1">
    <location>
        <begin position="80"/>
        <end position="100"/>
    </location>
</feature>
<feature type="transmembrane region" description="Helical; Name=3" evidence="1">
    <location>
        <begin position="101"/>
        <end position="120"/>
    </location>
</feature>
<feature type="topological domain" description="Cytoplasmic" evidence="1">
    <location>
        <begin position="121"/>
        <end position="139"/>
    </location>
</feature>
<feature type="transmembrane region" description="Helical; Name=4" evidence="1">
    <location>
        <begin position="140"/>
        <end position="158"/>
    </location>
</feature>
<feature type="topological domain" description="Extracellular" evidence="1">
    <location>
        <begin position="159"/>
        <end position="195"/>
    </location>
</feature>
<feature type="transmembrane region" description="Helical; Name=5" evidence="1">
    <location>
        <begin position="196"/>
        <end position="219"/>
    </location>
</feature>
<feature type="topological domain" description="Cytoplasmic" evidence="1">
    <location>
        <begin position="220"/>
        <end position="236"/>
    </location>
</feature>
<feature type="transmembrane region" description="Helical; Name=6" evidence="1">
    <location>
        <begin position="237"/>
        <end position="259"/>
    </location>
</feature>
<feature type="topological domain" description="Extracellular" evidence="1">
    <location>
        <begin position="260"/>
        <end position="272"/>
    </location>
</feature>
<feature type="transmembrane region" description="Helical; Name=7" evidence="1">
    <location>
        <begin position="273"/>
        <end position="292"/>
    </location>
</feature>
<feature type="topological domain" description="Cytoplasmic" evidence="1">
    <location>
        <begin position="293"/>
        <end position="312"/>
    </location>
</feature>
<feature type="glycosylation site" description="N-linked (GlcNAc...) asparagine" evidence="1">
    <location>
        <position position="5"/>
    </location>
</feature>
<feature type="disulfide bond" evidence="2">
    <location>
        <begin position="97"/>
        <end position="189"/>
    </location>
</feature>
<dbReference type="EMBL" id="AB065616">
    <property type="protein sequence ID" value="BAC05843.1"/>
    <property type="molecule type" value="Genomic_DNA"/>
</dbReference>
<dbReference type="EMBL" id="CH471257">
    <property type="protein sequence ID" value="EAW57528.1"/>
    <property type="molecule type" value="Genomic_DNA"/>
</dbReference>
<dbReference type="EMBL" id="BC136937">
    <property type="protein sequence ID" value="AAI36938.1"/>
    <property type="molecule type" value="mRNA"/>
</dbReference>
<dbReference type="EMBL" id="BC136940">
    <property type="protein sequence ID" value="AAI36941.1"/>
    <property type="molecule type" value="mRNA"/>
</dbReference>
<dbReference type="EMBL" id="BK004478">
    <property type="protein sequence ID" value="DAA04876.1"/>
    <property type="molecule type" value="Genomic_DNA"/>
</dbReference>
<dbReference type="CCDS" id="CCDS31121.1"/>
<dbReference type="RefSeq" id="NP_001004693.1">
    <property type="nucleotide sequence ID" value="NM_001004693.2"/>
</dbReference>
<dbReference type="RefSeq" id="XP_016855762.1">
    <property type="nucleotide sequence ID" value="XM_017000273.1"/>
</dbReference>
<dbReference type="SMR" id="Q8NGZ9"/>
<dbReference type="BioGRID" id="126037">
    <property type="interactions" value="3"/>
</dbReference>
<dbReference type="FunCoup" id="Q8NGZ9">
    <property type="interactions" value="450"/>
</dbReference>
<dbReference type="IntAct" id="Q8NGZ9">
    <property type="interactions" value="3"/>
</dbReference>
<dbReference type="STRING" id="9606.ENSP00000493236"/>
<dbReference type="GlyCosmos" id="Q8NGZ9">
    <property type="glycosylation" value="1 site, No reported glycans"/>
</dbReference>
<dbReference type="GlyGen" id="Q8NGZ9">
    <property type="glycosylation" value="1 site"/>
</dbReference>
<dbReference type="iPTMnet" id="Q8NGZ9"/>
<dbReference type="PhosphoSitePlus" id="Q8NGZ9"/>
<dbReference type="BioMuta" id="OR2T10"/>
<dbReference type="DMDM" id="74762586"/>
<dbReference type="MassIVE" id="Q8NGZ9"/>
<dbReference type="PaxDb" id="9606-ENSP00000329210"/>
<dbReference type="PeptideAtlas" id="Q8NGZ9"/>
<dbReference type="Antibodypedia" id="57446">
    <property type="antibodies" value="41 antibodies from 18 providers"/>
</dbReference>
<dbReference type="DNASU" id="127069"/>
<dbReference type="Ensembl" id="ENST00000330500.4">
    <property type="protein sequence ID" value="ENSP00000329210.2"/>
    <property type="gene ID" value="ENSG00000184022.4"/>
</dbReference>
<dbReference type="Ensembl" id="ENST00000642090.1">
    <property type="protein sequence ID" value="ENSP00000493236.1"/>
    <property type="gene ID" value="ENSG00000184022.4"/>
</dbReference>
<dbReference type="Ensembl" id="ENST00000710909.1">
    <property type="protein sequence ID" value="ENSP00000518545.1"/>
    <property type="gene ID" value="ENSG00000292303.1"/>
</dbReference>
<dbReference type="Ensembl" id="ENST00000710910.1">
    <property type="protein sequence ID" value="ENSP00000518546.1"/>
    <property type="gene ID" value="ENSG00000292303.1"/>
</dbReference>
<dbReference type="GeneID" id="127069"/>
<dbReference type="KEGG" id="hsa:127069"/>
<dbReference type="MANE-Select" id="ENST00000642090.1">
    <property type="protein sequence ID" value="ENSP00000493236.1"/>
    <property type="RefSeq nucleotide sequence ID" value="NM_001004693.2"/>
    <property type="RefSeq protein sequence ID" value="NP_001004693.1"/>
</dbReference>
<dbReference type="UCSC" id="uc010pzn.2">
    <property type="organism name" value="human"/>
</dbReference>
<dbReference type="AGR" id="HGNC:19573"/>
<dbReference type="CTD" id="127069"/>
<dbReference type="DisGeNET" id="127069"/>
<dbReference type="GeneCards" id="OR2T10"/>
<dbReference type="HGNC" id="HGNC:19573">
    <property type="gene designation" value="OR2T10"/>
</dbReference>
<dbReference type="HPA" id="ENSG00000184022">
    <property type="expression patterns" value="Tissue enriched (kidney)"/>
</dbReference>
<dbReference type="neXtProt" id="NX_Q8NGZ9"/>
<dbReference type="OpenTargets" id="ENSG00000184022"/>
<dbReference type="PharmGKB" id="PA134982857"/>
<dbReference type="VEuPathDB" id="HostDB:ENSG00000184022"/>
<dbReference type="eggNOG" id="ENOG502T92Q">
    <property type="taxonomic scope" value="Eukaryota"/>
</dbReference>
<dbReference type="GeneTree" id="ENSGT01130000278260"/>
<dbReference type="HOGENOM" id="CLU_012526_1_2_1"/>
<dbReference type="InParanoid" id="Q8NGZ9"/>
<dbReference type="OMA" id="MLRMQKA"/>
<dbReference type="PAN-GO" id="Q8NGZ9">
    <property type="GO annotations" value="0 GO annotations based on evolutionary models"/>
</dbReference>
<dbReference type="PhylomeDB" id="Q8NGZ9"/>
<dbReference type="TreeFam" id="TF337295"/>
<dbReference type="PathwayCommons" id="Q8NGZ9"/>
<dbReference type="Reactome" id="R-HSA-9752946">
    <property type="pathway name" value="Expression and translocation of olfactory receptors"/>
</dbReference>
<dbReference type="BioGRID-ORCS" id="127069">
    <property type="hits" value="6 hits in 742 CRISPR screens"/>
</dbReference>
<dbReference type="GeneWiki" id="OR2T10"/>
<dbReference type="GenomeRNAi" id="127069"/>
<dbReference type="Pharos" id="Q8NGZ9">
    <property type="development level" value="Tdark"/>
</dbReference>
<dbReference type="PRO" id="PR:Q8NGZ9"/>
<dbReference type="Proteomes" id="UP000005640">
    <property type="component" value="Chromosome 1"/>
</dbReference>
<dbReference type="RNAct" id="Q8NGZ9">
    <property type="molecule type" value="protein"/>
</dbReference>
<dbReference type="Bgee" id="ENSG00000184022">
    <property type="expression patterns" value="Expressed in adult mammalian kidney and 6 other cell types or tissues"/>
</dbReference>
<dbReference type="ExpressionAtlas" id="Q8NGZ9">
    <property type="expression patterns" value="baseline and differential"/>
</dbReference>
<dbReference type="GO" id="GO:0005886">
    <property type="term" value="C:plasma membrane"/>
    <property type="evidence" value="ECO:0000318"/>
    <property type="project" value="GO_Central"/>
</dbReference>
<dbReference type="GO" id="GO:0004930">
    <property type="term" value="F:G protein-coupled receptor activity"/>
    <property type="evidence" value="ECO:0007669"/>
    <property type="project" value="UniProtKB-KW"/>
</dbReference>
<dbReference type="GO" id="GO:0004984">
    <property type="term" value="F:olfactory receptor activity"/>
    <property type="evidence" value="ECO:0000318"/>
    <property type="project" value="GO_Central"/>
</dbReference>
<dbReference type="GO" id="GO:0050911">
    <property type="term" value="P:detection of chemical stimulus involved in sensory perception of smell"/>
    <property type="evidence" value="ECO:0000318"/>
    <property type="project" value="GO_Central"/>
</dbReference>
<dbReference type="CDD" id="cd15421">
    <property type="entry name" value="7tmA_OR2T-like"/>
    <property type="match status" value="1"/>
</dbReference>
<dbReference type="FunFam" id="1.20.1070.10:FF:000008">
    <property type="entry name" value="Olfactory receptor"/>
    <property type="match status" value="1"/>
</dbReference>
<dbReference type="Gene3D" id="1.20.1070.10">
    <property type="entry name" value="Rhodopsin 7-helix transmembrane proteins"/>
    <property type="match status" value="1"/>
</dbReference>
<dbReference type="InterPro" id="IPR000276">
    <property type="entry name" value="GPCR_Rhodpsn"/>
</dbReference>
<dbReference type="InterPro" id="IPR017452">
    <property type="entry name" value="GPCR_Rhodpsn_7TM"/>
</dbReference>
<dbReference type="InterPro" id="IPR000725">
    <property type="entry name" value="Olfact_rcpt"/>
</dbReference>
<dbReference type="PANTHER" id="PTHR26453">
    <property type="entry name" value="OLFACTORY RECEPTOR"/>
    <property type="match status" value="1"/>
</dbReference>
<dbReference type="Pfam" id="PF13853">
    <property type="entry name" value="7tm_4"/>
    <property type="match status" value="1"/>
</dbReference>
<dbReference type="PRINTS" id="PR00237">
    <property type="entry name" value="GPCRRHODOPSN"/>
</dbReference>
<dbReference type="PRINTS" id="PR00245">
    <property type="entry name" value="OLFACTORYR"/>
</dbReference>
<dbReference type="SUPFAM" id="SSF81321">
    <property type="entry name" value="Family A G protein-coupled receptor-like"/>
    <property type="match status" value="1"/>
</dbReference>
<dbReference type="PROSITE" id="PS00237">
    <property type="entry name" value="G_PROTEIN_RECEP_F1_1"/>
    <property type="match status" value="1"/>
</dbReference>
<dbReference type="PROSITE" id="PS50262">
    <property type="entry name" value="G_PROTEIN_RECEP_F1_2"/>
    <property type="match status" value="1"/>
</dbReference>
<accession>Q8NGZ9</accession>
<accession>B2RNK7</accession>
<comment type="function">
    <text evidence="3">Odorant receptor.</text>
</comment>
<comment type="subcellular location">
    <subcellularLocation>
        <location>Cell membrane</location>
        <topology>Multi-pass membrane protein</topology>
    </subcellularLocation>
</comment>
<comment type="similarity">
    <text evidence="2">Belongs to the G-protein coupled receptor 1 family.</text>
</comment>
<comment type="online information" name="Human Olfactory Receptor Data Exploratorium (HORDE)">
    <link uri="http://genome.weizmann.ac.il/horde/card/index/symbol:OR2T10"/>
</comment>
<reference key="1">
    <citation type="submission" date="2001-07" db="EMBL/GenBank/DDBJ databases">
        <title>Genome-wide discovery and analysis of human seven transmembrane helix receptor genes.</title>
        <authorList>
            <person name="Suwa M."/>
            <person name="Sato T."/>
            <person name="Okouchi I."/>
            <person name="Arita M."/>
            <person name="Futami K."/>
            <person name="Matsumoto S."/>
            <person name="Tsutsumi S."/>
            <person name="Aburatani H."/>
            <person name="Asai K."/>
            <person name="Akiyama Y."/>
        </authorList>
    </citation>
    <scope>NUCLEOTIDE SEQUENCE [GENOMIC DNA]</scope>
</reference>
<reference key="2">
    <citation type="submission" date="2005-07" db="EMBL/GenBank/DDBJ databases">
        <authorList>
            <person name="Mural R.J."/>
            <person name="Istrail S."/>
            <person name="Sutton G.G."/>
            <person name="Florea L."/>
            <person name="Halpern A.L."/>
            <person name="Mobarry C.M."/>
            <person name="Lippert R."/>
            <person name="Walenz B."/>
            <person name="Shatkay H."/>
            <person name="Dew I."/>
            <person name="Miller J.R."/>
            <person name="Flanigan M.J."/>
            <person name="Edwards N.J."/>
            <person name="Bolanos R."/>
            <person name="Fasulo D."/>
            <person name="Halldorsson B.V."/>
            <person name="Hannenhalli S."/>
            <person name="Turner R."/>
            <person name="Yooseph S."/>
            <person name="Lu F."/>
            <person name="Nusskern D.R."/>
            <person name="Shue B.C."/>
            <person name="Zheng X.H."/>
            <person name="Zhong F."/>
            <person name="Delcher A.L."/>
            <person name="Huson D.H."/>
            <person name="Kravitz S.A."/>
            <person name="Mouchard L."/>
            <person name="Reinert K."/>
            <person name="Remington K.A."/>
            <person name="Clark A.G."/>
            <person name="Waterman M.S."/>
            <person name="Eichler E.E."/>
            <person name="Adams M.D."/>
            <person name="Hunkapiller M.W."/>
            <person name="Myers E.W."/>
            <person name="Venter J.C."/>
        </authorList>
    </citation>
    <scope>NUCLEOTIDE SEQUENCE [LARGE SCALE GENOMIC DNA]</scope>
</reference>
<reference key="3">
    <citation type="journal article" date="2004" name="Genome Res.">
        <title>The status, quality, and expansion of the NIH full-length cDNA project: the Mammalian Gene Collection (MGC).</title>
        <authorList>
            <consortium name="The MGC Project Team"/>
        </authorList>
    </citation>
    <scope>NUCLEOTIDE SEQUENCE [LARGE SCALE MRNA]</scope>
</reference>
<reference key="4">
    <citation type="journal article" date="2004" name="Proc. Natl. Acad. Sci. U.S.A.">
        <title>The human olfactory receptor gene family.</title>
        <authorList>
            <person name="Malnic B."/>
            <person name="Godfrey P.A."/>
            <person name="Buck L.B."/>
        </authorList>
    </citation>
    <scope>IDENTIFICATION</scope>
</reference>
<reference key="5">
    <citation type="journal article" date="2004" name="Proc. Natl. Acad. Sci. U.S.A.">
        <authorList>
            <person name="Malnic B."/>
            <person name="Godfrey P.A."/>
            <person name="Buck L.B."/>
        </authorList>
    </citation>
    <scope>ERRATUM OF PUBMED:14983052</scope>
</reference>
<keyword id="KW-1003">Cell membrane</keyword>
<keyword id="KW-1015">Disulfide bond</keyword>
<keyword id="KW-0297">G-protein coupled receptor</keyword>
<keyword id="KW-0325">Glycoprotein</keyword>
<keyword id="KW-0472">Membrane</keyword>
<keyword id="KW-0552">Olfaction</keyword>
<keyword id="KW-0675">Receptor</keyword>
<keyword id="KW-1185">Reference proteome</keyword>
<keyword id="KW-0716">Sensory transduction</keyword>
<keyword id="KW-0807">Transducer</keyword>
<keyword id="KW-0812">Transmembrane</keyword>
<keyword id="KW-1133">Transmembrane helix</keyword>
<gene>
    <name type="primary">OR2T10</name>
</gene>
<organism>
    <name type="scientific">Homo sapiens</name>
    <name type="common">Human</name>
    <dbReference type="NCBI Taxonomy" id="9606"/>
    <lineage>
        <taxon>Eukaryota</taxon>
        <taxon>Metazoa</taxon>
        <taxon>Chordata</taxon>
        <taxon>Craniata</taxon>
        <taxon>Vertebrata</taxon>
        <taxon>Euteleostomi</taxon>
        <taxon>Mammalia</taxon>
        <taxon>Eutheria</taxon>
        <taxon>Euarchontoglires</taxon>
        <taxon>Primates</taxon>
        <taxon>Haplorrhini</taxon>
        <taxon>Catarrhini</taxon>
        <taxon>Hominidae</taxon>
        <taxon>Homo</taxon>
    </lineage>
</organism>
<evidence type="ECO:0000255" key="1"/>
<evidence type="ECO:0000255" key="2">
    <source>
        <dbReference type="PROSITE-ProRule" id="PRU00521"/>
    </source>
</evidence>
<evidence type="ECO:0000305" key="3"/>
<protein>
    <recommendedName>
        <fullName>Olfactory receptor 2T10</fullName>
    </recommendedName>
    <alternativeName>
        <fullName>Olfactory receptor OR1-64</fullName>
    </alternativeName>
</protein>